<feature type="chain" id="PRO_0000202793" description="Uncharacterized protein YGR039W">
    <location>
        <begin position="1"/>
        <end position="103"/>
    </location>
</feature>
<feature type="sequence variant" description="In strain: SK1.">
    <original>E</original>
    <variation>G</variation>
    <location>
        <position position="26"/>
    </location>
</feature>
<feature type="sequence variant" description="In strain: SK1.">
    <original>S</original>
    <variation>R</variation>
    <location>
        <position position="39"/>
    </location>
</feature>
<feature type="sequence variant" description="In strain: SK1.">
    <original>N</original>
    <variation>D</variation>
    <location>
        <position position="79"/>
    </location>
</feature>
<reference key="1">
    <citation type="journal article" date="2005" name="Nat. Genet.">
        <title>Quantitative trait loci mapped to single-nucleotide resolution in yeast.</title>
        <authorList>
            <person name="Deutschbauer A.M."/>
            <person name="Davis R.W."/>
        </authorList>
    </citation>
    <scope>NUCLEOTIDE SEQUENCE [GENOMIC DNA]</scope>
    <source>
        <strain>SK1</strain>
    </source>
</reference>
<reference key="2">
    <citation type="journal article" date="1997" name="Yeast">
        <title>Sequence analysis of 203 kilobases from Saccharomyces cerevisiae chromosome VII.</title>
        <authorList>
            <person name="Rieger M."/>
            <person name="Brueckner M."/>
            <person name="Schaefer M."/>
            <person name="Mueller-Auer S."/>
        </authorList>
    </citation>
    <scope>NUCLEOTIDE SEQUENCE [GENOMIC DNA]</scope>
    <source>
        <strain>ATCC 204508 / S288c</strain>
    </source>
</reference>
<reference key="3">
    <citation type="journal article" date="1997" name="Nature">
        <title>The nucleotide sequence of Saccharomyces cerevisiae chromosome VII.</title>
        <authorList>
            <person name="Tettelin H."/>
            <person name="Agostoni-Carbone M.L."/>
            <person name="Albermann K."/>
            <person name="Albers M."/>
            <person name="Arroyo J."/>
            <person name="Backes U."/>
            <person name="Barreiros T."/>
            <person name="Bertani I."/>
            <person name="Bjourson A.J."/>
            <person name="Brueckner M."/>
            <person name="Bruschi C.V."/>
            <person name="Carignani G."/>
            <person name="Castagnoli L."/>
            <person name="Cerdan E."/>
            <person name="Clemente M.L."/>
            <person name="Coblenz A."/>
            <person name="Coglievina M."/>
            <person name="Coissac E."/>
            <person name="Defoor E."/>
            <person name="Del Bino S."/>
            <person name="Delius H."/>
            <person name="Delneri D."/>
            <person name="de Wergifosse P."/>
            <person name="Dujon B."/>
            <person name="Durand P."/>
            <person name="Entian K.-D."/>
            <person name="Eraso P."/>
            <person name="Escribano V."/>
            <person name="Fabiani L."/>
            <person name="Fartmann B."/>
            <person name="Feroli F."/>
            <person name="Feuermann M."/>
            <person name="Frontali L."/>
            <person name="Garcia-Gonzalez M."/>
            <person name="Garcia-Saez M.I."/>
            <person name="Goffeau A."/>
            <person name="Guerreiro P."/>
            <person name="Hani J."/>
            <person name="Hansen M."/>
            <person name="Hebling U."/>
            <person name="Hernandez K."/>
            <person name="Heumann K."/>
            <person name="Hilger F."/>
            <person name="Hofmann B."/>
            <person name="Indge K.J."/>
            <person name="James C.M."/>
            <person name="Klima R."/>
            <person name="Koetter P."/>
            <person name="Kramer B."/>
            <person name="Kramer W."/>
            <person name="Lauquin G."/>
            <person name="Leuther H."/>
            <person name="Louis E.J."/>
            <person name="Maillier E."/>
            <person name="Marconi A."/>
            <person name="Martegani E."/>
            <person name="Mazon M.J."/>
            <person name="Mazzoni C."/>
            <person name="McReynolds A.D.K."/>
            <person name="Melchioretto P."/>
            <person name="Mewes H.-W."/>
            <person name="Minenkova O."/>
            <person name="Mueller-Auer S."/>
            <person name="Nawrocki A."/>
            <person name="Netter P."/>
            <person name="Neu R."/>
            <person name="Nombela C."/>
            <person name="Oliver S.G."/>
            <person name="Panzeri L."/>
            <person name="Paoluzi S."/>
            <person name="Plevani P."/>
            <person name="Portetelle D."/>
            <person name="Portillo F."/>
            <person name="Potier S."/>
            <person name="Purnelle B."/>
            <person name="Rieger M."/>
            <person name="Riles L."/>
            <person name="Rinaldi T."/>
            <person name="Robben J."/>
            <person name="Rodrigues-Pousada C."/>
            <person name="Rodriguez-Belmonte E."/>
            <person name="Rodriguez-Torres A.M."/>
            <person name="Rose M."/>
            <person name="Ruzzi M."/>
            <person name="Saliola M."/>
            <person name="Sanchez-Perez M."/>
            <person name="Schaefer B."/>
            <person name="Schaefer M."/>
            <person name="Scharfe M."/>
            <person name="Schmidheini T."/>
            <person name="Schreer A."/>
            <person name="Skala J."/>
            <person name="Souciet J.-L."/>
            <person name="Steensma H.Y."/>
            <person name="Talla E."/>
            <person name="Thierry A."/>
            <person name="Vandenbol M."/>
            <person name="van der Aart Q.J.M."/>
            <person name="Van Dyck L."/>
            <person name="Vanoni M."/>
            <person name="Verhasselt P."/>
            <person name="Voet M."/>
            <person name="Volckaert G."/>
            <person name="Wambutt R."/>
            <person name="Watson M.D."/>
            <person name="Weber N."/>
            <person name="Wedler E."/>
            <person name="Wedler H."/>
            <person name="Wipfli P."/>
            <person name="Wolf K."/>
            <person name="Wright L.F."/>
            <person name="Zaccaria P."/>
            <person name="Zimmermann M."/>
            <person name="Zollner A."/>
            <person name="Kleine K."/>
        </authorList>
    </citation>
    <scope>NUCLEOTIDE SEQUENCE [LARGE SCALE GENOMIC DNA]</scope>
    <source>
        <strain>ATCC 204508 / S288c</strain>
    </source>
</reference>
<reference key="4">
    <citation type="journal article" date="2014" name="G3 (Bethesda)">
        <title>The reference genome sequence of Saccharomyces cerevisiae: Then and now.</title>
        <authorList>
            <person name="Engel S.R."/>
            <person name="Dietrich F.S."/>
            <person name="Fisk D.G."/>
            <person name="Binkley G."/>
            <person name="Balakrishnan R."/>
            <person name="Costanzo M.C."/>
            <person name="Dwight S.S."/>
            <person name="Hitz B.C."/>
            <person name="Karra K."/>
            <person name="Nash R.S."/>
            <person name="Weng S."/>
            <person name="Wong E.D."/>
            <person name="Lloyd P."/>
            <person name="Skrzypek M.S."/>
            <person name="Miyasato S.R."/>
            <person name="Simison M."/>
            <person name="Cherry J.M."/>
        </authorList>
    </citation>
    <scope>GENOME REANNOTATION</scope>
    <source>
        <strain>ATCC 204508 / S288c</strain>
    </source>
</reference>
<reference key="5">
    <citation type="journal article" date="2007" name="Genome Res.">
        <title>Approaching a complete repository of sequence-verified protein-encoding clones for Saccharomyces cerevisiae.</title>
        <authorList>
            <person name="Hu Y."/>
            <person name="Rolfs A."/>
            <person name="Bhullar B."/>
            <person name="Murthy T.V.S."/>
            <person name="Zhu C."/>
            <person name="Berger M.F."/>
            <person name="Camargo A.A."/>
            <person name="Kelley F."/>
            <person name="McCarron S."/>
            <person name="Jepson D."/>
            <person name="Richardson A."/>
            <person name="Raphael J."/>
            <person name="Moreira D."/>
            <person name="Taycher E."/>
            <person name="Zuo D."/>
            <person name="Mohr S."/>
            <person name="Kane M.F."/>
            <person name="Williamson J."/>
            <person name="Simpson A.J.G."/>
            <person name="Bulyk M.L."/>
            <person name="Harlow E."/>
            <person name="Marsischky G."/>
            <person name="Kolodner R.D."/>
            <person name="LaBaer J."/>
        </authorList>
    </citation>
    <scope>NUCLEOTIDE SEQUENCE [GENOMIC DNA]</scope>
    <source>
        <strain>ATCC 204508 / S288c</strain>
    </source>
</reference>
<dbReference type="EMBL" id="DQ115391">
    <property type="protein sequence ID" value="AAZ22455.1"/>
    <property type="molecule type" value="Genomic_DNA"/>
</dbReference>
<dbReference type="EMBL" id="Z72824">
    <property type="protein sequence ID" value="CAA97034.1"/>
    <property type="molecule type" value="Genomic_DNA"/>
</dbReference>
<dbReference type="EMBL" id="AY558545">
    <property type="protein sequence ID" value="AAS56871.1"/>
    <property type="molecule type" value="Genomic_DNA"/>
</dbReference>
<dbReference type="EMBL" id="BK006941">
    <property type="protein sequence ID" value="DAA80301.1"/>
    <property type="molecule type" value="Genomic_DNA"/>
</dbReference>
<dbReference type="PIR" id="S64330">
    <property type="entry name" value="S64330"/>
</dbReference>
<dbReference type="RefSeq" id="NP_001335781.1">
    <property type="nucleotide sequence ID" value="NM_001348840.1"/>
</dbReference>
<dbReference type="FunCoup" id="P53225">
    <property type="interactions" value="21"/>
</dbReference>
<dbReference type="STRING" id="4932.YGR039W"/>
<dbReference type="PaxDb" id="4932-YGR039W"/>
<dbReference type="EnsemblFungi" id="YGR039W_mRNA">
    <property type="protein sequence ID" value="YGR039W"/>
    <property type="gene ID" value="YGR039W"/>
</dbReference>
<dbReference type="GeneID" id="852930"/>
<dbReference type="AGR" id="SGD:S000003271"/>
<dbReference type="SGD" id="S000003271">
    <property type="gene designation" value="YGR039W"/>
</dbReference>
<dbReference type="HOGENOM" id="CLU_2265823_0_0_1"/>
<dbReference type="InParanoid" id="P53225"/>
<dbReference type="PRO" id="PR:P53225"/>
<dbReference type="Proteomes" id="UP000002311">
    <property type="component" value="Chromosome VII"/>
</dbReference>
<dbReference type="RNAct" id="P53225">
    <property type="molecule type" value="protein"/>
</dbReference>
<sequence>MLFFTGLVILSYLLGGKKDWLLIMYEASDYLEFLNRLSSMLFKFELFEHLSSTFLIFSHSKRAVKLLEIYRSRHISIYNVFLLRHPKYFQSVDIALYLTRSQT</sequence>
<proteinExistence type="predicted"/>
<organism>
    <name type="scientific">Saccharomyces cerevisiae (strain ATCC 204508 / S288c)</name>
    <name type="common">Baker's yeast</name>
    <dbReference type="NCBI Taxonomy" id="559292"/>
    <lineage>
        <taxon>Eukaryota</taxon>
        <taxon>Fungi</taxon>
        <taxon>Dikarya</taxon>
        <taxon>Ascomycota</taxon>
        <taxon>Saccharomycotina</taxon>
        <taxon>Saccharomycetes</taxon>
        <taxon>Saccharomycetales</taxon>
        <taxon>Saccharomycetaceae</taxon>
        <taxon>Saccharomyces</taxon>
    </lineage>
</organism>
<protein>
    <recommendedName>
        <fullName>Uncharacterized protein YGR039W</fullName>
    </recommendedName>
</protein>
<keyword id="KW-1185">Reference proteome</keyword>
<name>YG1R_YEAST</name>
<gene>
    <name type="ordered locus">YGR039W</name>
</gene>
<accession>P53225</accession>
<accession>A0A1S0T076</accession>
<accession>Q45U44</accession>